<protein>
    <recommendedName>
        <fullName>Lipoteichoic acid synthase</fullName>
    </recommendedName>
    <component>
        <recommendedName>
            <fullName>Glycerol phosphate lipoteichoic acid synthase</fullName>
            <shortName>LTA synthase</shortName>
            <ecNumber>2.7.8.-</ecNumber>
        </recommendedName>
        <alternativeName>
            <fullName>Polyglycerol phosphate synthase</fullName>
        </alternativeName>
    </component>
    <component>
        <recommendedName>
            <fullName>Processed glycerol phosphate lipoteichoic acid synthase</fullName>
        </recommendedName>
    </component>
</protein>
<comment type="function">
    <text evidence="1">Catalyzes the polymerization of lipoteichoic acid (LTA) polyglycerol phosphate, a reaction that presumably uses phosphatidylglycerol (PG) as substrate. Is required for staphylococcal growth and cell division process (By similarity).</text>
</comment>
<comment type="pathway">
    <text>Cell wall biogenesis; lipoteichoic acid biosynthesis.</text>
</comment>
<comment type="subcellular location">
    <subcellularLocation>
        <location evidence="4">Cell membrane</location>
        <topology evidence="4">Multi-pass membrane protein</topology>
    </subcellularLocation>
</comment>
<comment type="subcellular location">
    <molecule>Processed glycerol phosphate lipoteichoic acid synthase</molecule>
    <subcellularLocation>
        <location evidence="1">Secreted</location>
    </subcellularLocation>
</comment>
<comment type="PTM">
    <text evidence="1">Proteolytically cleaved.</text>
</comment>
<comment type="similarity">
    <text evidence="4">Belongs to the LTA synthase family.</text>
</comment>
<reference key="1">
    <citation type="journal article" date="2001" name="Lancet">
        <title>Whole genome sequencing of meticillin-resistant Staphylococcus aureus.</title>
        <authorList>
            <person name="Kuroda M."/>
            <person name="Ohta T."/>
            <person name="Uchiyama I."/>
            <person name="Baba T."/>
            <person name="Yuzawa H."/>
            <person name="Kobayashi I."/>
            <person name="Cui L."/>
            <person name="Oguchi A."/>
            <person name="Aoki K."/>
            <person name="Nagai Y."/>
            <person name="Lian J.-Q."/>
            <person name="Ito T."/>
            <person name="Kanamori M."/>
            <person name="Matsumaru H."/>
            <person name="Maruyama A."/>
            <person name="Murakami H."/>
            <person name="Hosoyama A."/>
            <person name="Mizutani-Ui Y."/>
            <person name="Takahashi N.K."/>
            <person name="Sawano T."/>
            <person name="Inoue R."/>
            <person name="Kaito C."/>
            <person name="Sekimizu K."/>
            <person name="Hirakawa H."/>
            <person name="Kuhara S."/>
            <person name="Goto S."/>
            <person name="Yabuzaki J."/>
            <person name="Kanehisa M."/>
            <person name="Yamashita A."/>
            <person name="Oshima K."/>
            <person name="Furuya K."/>
            <person name="Yoshino C."/>
            <person name="Shiba T."/>
            <person name="Hattori M."/>
            <person name="Ogasawara N."/>
            <person name="Hayashi H."/>
            <person name="Hiramatsu K."/>
        </authorList>
    </citation>
    <scope>NUCLEOTIDE SEQUENCE [LARGE SCALE GENOMIC DNA]</scope>
    <source>
        <strain>N315</strain>
    </source>
</reference>
<reference key="2">
    <citation type="submission" date="2007-10" db="UniProtKB">
        <title>Shotgun proteomic analysis of total and membrane protein extracts of S. aureus strain N315.</title>
        <authorList>
            <person name="Vaezzadeh A.R."/>
            <person name="Deshusses J."/>
            <person name="Lescuyer P."/>
            <person name="Hochstrasser D.F."/>
        </authorList>
    </citation>
    <scope>IDENTIFICATION BY MASS SPECTROMETRY [LARGE SCALE ANALYSIS]</scope>
    <source>
        <strain>N315</strain>
    </source>
</reference>
<organism>
    <name type="scientific">Staphylococcus aureus (strain N315)</name>
    <dbReference type="NCBI Taxonomy" id="158879"/>
    <lineage>
        <taxon>Bacteria</taxon>
        <taxon>Bacillati</taxon>
        <taxon>Bacillota</taxon>
        <taxon>Bacilli</taxon>
        <taxon>Bacillales</taxon>
        <taxon>Staphylococcaceae</taxon>
        <taxon>Staphylococcus</taxon>
    </lineage>
</organism>
<name>LTAS_STAAN</name>
<accession>Q7A6U1</accession>
<gene>
    <name type="primary">ltaS</name>
    <name type="ordered locus">SA0674</name>
</gene>
<feature type="chain" id="PRO_0000305362" description="Glycerol phosphate lipoteichoic acid synthase">
    <location>
        <begin position="1"/>
        <end position="217"/>
    </location>
</feature>
<feature type="chain" id="PRO_0000305363" description="Processed glycerol phosphate lipoteichoic acid synthase">
    <location>
        <begin position="218"/>
        <end position="646"/>
    </location>
</feature>
<feature type="topological domain" description="Cytoplasmic" evidence="2">
    <location>
        <begin position="1"/>
        <end position="7"/>
    </location>
</feature>
<feature type="transmembrane region" description="Helical" evidence="2">
    <location>
        <begin position="8"/>
        <end position="28"/>
    </location>
</feature>
<feature type="topological domain" description="Extracellular" evidence="2">
    <location>
        <begin position="29"/>
        <end position="43"/>
    </location>
</feature>
<feature type="transmembrane region" description="Helical" evidence="2">
    <location>
        <begin position="44"/>
        <end position="64"/>
    </location>
</feature>
<feature type="topological domain" description="Cytoplasmic" evidence="2">
    <location>
        <begin position="65"/>
        <end position="68"/>
    </location>
</feature>
<feature type="transmembrane region" description="Helical" evidence="2">
    <location>
        <begin position="69"/>
        <end position="89"/>
    </location>
</feature>
<feature type="topological domain" description="Extracellular" evidence="2">
    <location>
        <begin position="90"/>
        <end position="119"/>
    </location>
</feature>
<feature type="transmembrane region" description="Helical" evidence="2">
    <location>
        <begin position="120"/>
        <end position="140"/>
    </location>
</feature>
<feature type="topological domain" description="Cytoplasmic" evidence="2">
    <location>
        <begin position="141"/>
        <end position="153"/>
    </location>
</feature>
<feature type="transmembrane region" description="Helical" evidence="2">
    <location>
        <begin position="154"/>
        <end position="174"/>
    </location>
</feature>
<feature type="topological domain" description="Extracellular" evidence="2">
    <location>
        <begin position="175"/>
        <end position="646"/>
    </location>
</feature>
<feature type="region of interest" description="Disordered" evidence="3">
    <location>
        <begin position="623"/>
        <end position="646"/>
    </location>
</feature>
<feature type="compositionally biased region" description="Basic and acidic residues" evidence="3">
    <location>
        <begin position="623"/>
        <end position="638"/>
    </location>
</feature>
<feature type="active site" evidence="1">
    <location>
        <position position="300"/>
    </location>
</feature>
<feature type="binding site" evidence="1">
    <location>
        <position position="255"/>
    </location>
    <ligand>
        <name>Mn(2+)</name>
        <dbReference type="ChEBI" id="CHEBI:29035"/>
    </ligand>
</feature>
<feature type="binding site" evidence="1">
    <location>
        <position position="300"/>
    </location>
    <ligand>
        <name>Mn(2+)</name>
        <dbReference type="ChEBI" id="CHEBI:29035"/>
    </ligand>
</feature>
<feature type="binding site" evidence="1">
    <location>
        <position position="416"/>
    </location>
    <ligand>
        <name>substrate</name>
    </ligand>
</feature>
<feature type="binding site" evidence="1">
    <location>
        <position position="475"/>
    </location>
    <ligand>
        <name>Mn(2+)</name>
        <dbReference type="ChEBI" id="CHEBI:29035"/>
    </ligand>
</feature>
<feature type="binding site" evidence="1">
    <location>
        <position position="476"/>
    </location>
    <ligand>
        <name>Mn(2+)</name>
        <dbReference type="ChEBI" id="CHEBI:29035"/>
    </ligand>
</feature>
<feature type="site" description="Cleavage" evidence="1">
    <location>
        <begin position="217"/>
        <end position="218"/>
    </location>
</feature>
<sequence length="646" mass="74400">MSSQKKKISLFAFFLLTVITITLKTYFSYYVDFSLGVKGLVQNLILLMNPYSLVALVLSVFLFFKGKKAFWFMFIGGFLLTFLLYANVVYFRFFSDFLTFSTLNQVGNVESMGGAVSASFKWYDFVYFIDTLVYLFILIFKTKWLDTKAFSKKFVPVVMAASVALFFLNLAFAETDRPELLTRTFDHKYLVKYLGPYNFTVYDGVKTIENNQQKALASEDDLTKVLNYTKQRQTEPNPEYYGVAKKKNIIKIHLESFQTFLINKKVNGKEVTPFLNKLSSGKEQFTYFPNFFHQTGQGKTSDSEFTMDNSLYGLPQGSAFSLKGDNTYQSLPAILDQKQGYKSDVMHGDYKTFWNRDQVYKHFGIDKFYDATYYDMSDKNVVNLGLKDKIFFKDSANYQAKMKSPFYSHLITLTNHYPFTLDEKDATIEKSNTGDATVDGYIQTARYLDEALEEYINDLKKKGLYDNSVIMIYGDHYGISENHNNAMEKLLGEKITPAKFTDLNRTGFWIKIPGKSGGINNEYAGQVDVMPTILHLAGIDTKNYLMFGTDLFSKGHNQVVPFRNGDFITKDYKYVNGKIYSNKNNELITTQPADFEKNKKQVEKDLEMSDNVLNGDLFRFYKNPDFKKVNPSKYKYETGPKANSKK</sequence>
<evidence type="ECO:0000250" key="1"/>
<evidence type="ECO:0000255" key="2"/>
<evidence type="ECO:0000256" key="3">
    <source>
        <dbReference type="SAM" id="MobiDB-lite"/>
    </source>
</evidence>
<evidence type="ECO:0000305" key="4"/>
<keyword id="KW-1003">Cell membrane</keyword>
<keyword id="KW-0961">Cell wall biogenesis/degradation</keyword>
<keyword id="KW-0464">Manganese</keyword>
<keyword id="KW-0472">Membrane</keyword>
<keyword id="KW-0479">Metal-binding</keyword>
<keyword id="KW-0964">Secreted</keyword>
<keyword id="KW-0808">Transferase</keyword>
<keyword id="KW-0812">Transmembrane</keyword>
<keyword id="KW-1133">Transmembrane helix</keyword>
<proteinExistence type="evidence at protein level"/>
<dbReference type="EC" id="2.7.8.-"/>
<dbReference type="EMBL" id="BA000018">
    <property type="protein sequence ID" value="BAB41907.1"/>
    <property type="molecule type" value="Genomic_DNA"/>
</dbReference>
<dbReference type="PIR" id="H89843">
    <property type="entry name" value="H89843"/>
</dbReference>
<dbReference type="RefSeq" id="WP_000098285.1">
    <property type="nucleotide sequence ID" value="NC_002745.2"/>
</dbReference>
<dbReference type="SMR" id="Q7A6U1"/>
<dbReference type="EnsemblBacteria" id="BAB41907">
    <property type="protein sequence ID" value="BAB41907"/>
    <property type="gene ID" value="BAB41907"/>
</dbReference>
<dbReference type="KEGG" id="sau:SA0674"/>
<dbReference type="HOGENOM" id="CLU_021310_0_0_9"/>
<dbReference type="UniPathway" id="UPA00556"/>
<dbReference type="GO" id="GO:0005576">
    <property type="term" value="C:extracellular region"/>
    <property type="evidence" value="ECO:0007669"/>
    <property type="project" value="UniProtKB-SubCell"/>
</dbReference>
<dbReference type="GO" id="GO:0005886">
    <property type="term" value="C:plasma membrane"/>
    <property type="evidence" value="ECO:0007669"/>
    <property type="project" value="UniProtKB-SubCell"/>
</dbReference>
<dbReference type="GO" id="GO:0046872">
    <property type="term" value="F:metal ion binding"/>
    <property type="evidence" value="ECO:0007669"/>
    <property type="project" value="UniProtKB-KW"/>
</dbReference>
<dbReference type="GO" id="GO:0016740">
    <property type="term" value="F:transferase activity"/>
    <property type="evidence" value="ECO:0007669"/>
    <property type="project" value="UniProtKB-KW"/>
</dbReference>
<dbReference type="GO" id="GO:0071555">
    <property type="term" value="P:cell wall organization"/>
    <property type="evidence" value="ECO:0007669"/>
    <property type="project" value="UniProtKB-KW"/>
</dbReference>
<dbReference type="GO" id="GO:0070395">
    <property type="term" value="P:lipoteichoic acid biosynthetic process"/>
    <property type="evidence" value="ECO:0007669"/>
    <property type="project" value="UniProtKB-UniPathway"/>
</dbReference>
<dbReference type="CDD" id="cd16015">
    <property type="entry name" value="LTA_synthase"/>
    <property type="match status" value="1"/>
</dbReference>
<dbReference type="Gene3D" id="3.30.1120.170">
    <property type="match status" value="1"/>
</dbReference>
<dbReference type="Gene3D" id="3.40.720.10">
    <property type="entry name" value="Alkaline Phosphatase, subunit A"/>
    <property type="match status" value="1"/>
</dbReference>
<dbReference type="InterPro" id="IPR017850">
    <property type="entry name" value="Alkaline_phosphatase_core_sf"/>
</dbReference>
<dbReference type="InterPro" id="IPR012160">
    <property type="entry name" value="LtaS-like"/>
</dbReference>
<dbReference type="InterPro" id="IPR050448">
    <property type="entry name" value="OpgB/LTA_synthase_biosynth"/>
</dbReference>
<dbReference type="InterPro" id="IPR000917">
    <property type="entry name" value="Sulfatase_N"/>
</dbReference>
<dbReference type="PANTHER" id="PTHR47371">
    <property type="entry name" value="LIPOTEICHOIC ACID SYNTHASE"/>
    <property type="match status" value="1"/>
</dbReference>
<dbReference type="PANTHER" id="PTHR47371:SF3">
    <property type="entry name" value="PHOSPHOGLYCEROL TRANSFERASE I"/>
    <property type="match status" value="1"/>
</dbReference>
<dbReference type="Pfam" id="PF00884">
    <property type="entry name" value="Sulfatase"/>
    <property type="match status" value="1"/>
</dbReference>
<dbReference type="PIRSF" id="PIRSF005091">
    <property type="entry name" value="Mmb_sulf_HI1246"/>
    <property type="match status" value="1"/>
</dbReference>
<dbReference type="SUPFAM" id="SSF53649">
    <property type="entry name" value="Alkaline phosphatase-like"/>
    <property type="match status" value="1"/>
</dbReference>